<reference key="1">
    <citation type="journal article" date="2012" name="PLoS ONE">
        <title>Rbm15-Mkl1 interacts with the Setd1b histone H3-Lys4 methyltransferase via a SPOC domain that is required for cytokine-independent proliferation.</title>
        <authorList>
            <person name="Lee J.H."/>
            <person name="Skalnik D.G."/>
        </authorList>
    </citation>
    <scope>NUCLEOTIDE SEQUENCE [MRNA] (ISOFORM 1)</scope>
    <scope>INTERACTION WITH RBM15</scope>
    <scope>MUTAGENESIS OF LEU-577 AND ASP-579</scope>
</reference>
<reference key="2">
    <citation type="journal article" date="2006" name="Nature">
        <title>The finished DNA sequence of human chromosome 12.</title>
        <authorList>
            <person name="Scherer S.E."/>
            <person name="Muzny D.M."/>
            <person name="Buhay C.J."/>
            <person name="Chen R."/>
            <person name="Cree A."/>
            <person name="Ding Y."/>
            <person name="Dugan-Rocha S."/>
            <person name="Gill R."/>
            <person name="Gunaratne P."/>
            <person name="Harris R.A."/>
            <person name="Hawes A.C."/>
            <person name="Hernandez J."/>
            <person name="Hodgson A.V."/>
            <person name="Hume J."/>
            <person name="Jackson A."/>
            <person name="Khan Z.M."/>
            <person name="Kovar-Smith C."/>
            <person name="Lewis L.R."/>
            <person name="Lozado R.J."/>
            <person name="Metzker M.L."/>
            <person name="Milosavljevic A."/>
            <person name="Miner G.R."/>
            <person name="Montgomery K.T."/>
            <person name="Morgan M.B."/>
            <person name="Nazareth L.V."/>
            <person name="Scott G."/>
            <person name="Sodergren E."/>
            <person name="Song X.-Z."/>
            <person name="Steffen D."/>
            <person name="Lovering R.C."/>
            <person name="Wheeler D.A."/>
            <person name="Worley K.C."/>
            <person name="Yuan Y."/>
            <person name="Zhang Z."/>
            <person name="Adams C.Q."/>
            <person name="Ansari-Lari M.A."/>
            <person name="Ayele M."/>
            <person name="Brown M.J."/>
            <person name="Chen G."/>
            <person name="Chen Z."/>
            <person name="Clerc-Blankenburg K.P."/>
            <person name="Davis C."/>
            <person name="Delgado O."/>
            <person name="Dinh H.H."/>
            <person name="Draper H."/>
            <person name="Gonzalez-Garay M.L."/>
            <person name="Havlak P."/>
            <person name="Jackson L.R."/>
            <person name="Jacob L.S."/>
            <person name="Kelly S.H."/>
            <person name="Li L."/>
            <person name="Li Z."/>
            <person name="Liu J."/>
            <person name="Liu W."/>
            <person name="Lu J."/>
            <person name="Maheshwari M."/>
            <person name="Nguyen B.-V."/>
            <person name="Okwuonu G.O."/>
            <person name="Pasternak S."/>
            <person name="Perez L.M."/>
            <person name="Plopper F.J.H."/>
            <person name="Santibanez J."/>
            <person name="Shen H."/>
            <person name="Tabor P.E."/>
            <person name="Verduzco D."/>
            <person name="Waldron L."/>
            <person name="Wang Q."/>
            <person name="Williams G.A."/>
            <person name="Zhang J."/>
            <person name="Zhou J."/>
            <person name="Allen C.C."/>
            <person name="Amin A.G."/>
            <person name="Anyalebechi V."/>
            <person name="Bailey M."/>
            <person name="Barbaria J.A."/>
            <person name="Bimage K.E."/>
            <person name="Bryant N.P."/>
            <person name="Burch P.E."/>
            <person name="Burkett C.E."/>
            <person name="Burrell K.L."/>
            <person name="Calderon E."/>
            <person name="Cardenas V."/>
            <person name="Carter K."/>
            <person name="Casias K."/>
            <person name="Cavazos I."/>
            <person name="Cavazos S.R."/>
            <person name="Ceasar H."/>
            <person name="Chacko J."/>
            <person name="Chan S.N."/>
            <person name="Chavez D."/>
            <person name="Christopoulos C."/>
            <person name="Chu J."/>
            <person name="Cockrell R."/>
            <person name="Cox C.D."/>
            <person name="Dang M."/>
            <person name="Dathorne S.R."/>
            <person name="David R."/>
            <person name="Davis C.M."/>
            <person name="Davy-Carroll L."/>
            <person name="Deshazo D.R."/>
            <person name="Donlin J.E."/>
            <person name="D'Souza L."/>
            <person name="Eaves K.A."/>
            <person name="Egan A."/>
            <person name="Emery-Cohen A.J."/>
            <person name="Escotto M."/>
            <person name="Flagg N."/>
            <person name="Forbes L.D."/>
            <person name="Gabisi A.M."/>
            <person name="Garza M."/>
            <person name="Hamilton C."/>
            <person name="Henderson N."/>
            <person name="Hernandez O."/>
            <person name="Hines S."/>
            <person name="Hogues M.E."/>
            <person name="Huang M."/>
            <person name="Idlebird D.G."/>
            <person name="Johnson R."/>
            <person name="Jolivet A."/>
            <person name="Jones S."/>
            <person name="Kagan R."/>
            <person name="King L.M."/>
            <person name="Leal B."/>
            <person name="Lebow H."/>
            <person name="Lee S."/>
            <person name="LeVan J.M."/>
            <person name="Lewis L.C."/>
            <person name="London P."/>
            <person name="Lorensuhewa L.M."/>
            <person name="Loulseged H."/>
            <person name="Lovett D.A."/>
            <person name="Lucier A."/>
            <person name="Lucier R.L."/>
            <person name="Ma J."/>
            <person name="Madu R.C."/>
            <person name="Mapua P."/>
            <person name="Martindale A.D."/>
            <person name="Martinez E."/>
            <person name="Massey E."/>
            <person name="Mawhiney S."/>
            <person name="Meador M.G."/>
            <person name="Mendez S."/>
            <person name="Mercado C."/>
            <person name="Mercado I.C."/>
            <person name="Merritt C.E."/>
            <person name="Miner Z.L."/>
            <person name="Minja E."/>
            <person name="Mitchell T."/>
            <person name="Mohabbat F."/>
            <person name="Mohabbat K."/>
            <person name="Montgomery B."/>
            <person name="Moore N."/>
            <person name="Morris S."/>
            <person name="Munidasa M."/>
            <person name="Ngo R.N."/>
            <person name="Nguyen N.B."/>
            <person name="Nickerson E."/>
            <person name="Nwaokelemeh O.O."/>
            <person name="Nwokenkwo S."/>
            <person name="Obregon M."/>
            <person name="Oguh M."/>
            <person name="Oragunye N."/>
            <person name="Oviedo R.J."/>
            <person name="Parish B.J."/>
            <person name="Parker D.N."/>
            <person name="Parrish J."/>
            <person name="Parks K.L."/>
            <person name="Paul H.A."/>
            <person name="Payton B.A."/>
            <person name="Perez A."/>
            <person name="Perrin W."/>
            <person name="Pickens A."/>
            <person name="Primus E.L."/>
            <person name="Pu L.-L."/>
            <person name="Puazo M."/>
            <person name="Quiles M.M."/>
            <person name="Quiroz J.B."/>
            <person name="Rabata D."/>
            <person name="Reeves K."/>
            <person name="Ruiz S.J."/>
            <person name="Shao H."/>
            <person name="Sisson I."/>
            <person name="Sonaike T."/>
            <person name="Sorelle R.P."/>
            <person name="Sutton A.E."/>
            <person name="Svatek A.F."/>
            <person name="Svetz L.A."/>
            <person name="Tamerisa K.S."/>
            <person name="Taylor T.R."/>
            <person name="Teague B."/>
            <person name="Thomas N."/>
            <person name="Thorn R.D."/>
            <person name="Trejos Z.Y."/>
            <person name="Trevino B.K."/>
            <person name="Ukegbu O.N."/>
            <person name="Urban J.B."/>
            <person name="Vasquez L.I."/>
            <person name="Vera V.A."/>
            <person name="Villasana D.M."/>
            <person name="Wang L."/>
            <person name="Ward-Moore S."/>
            <person name="Warren J.T."/>
            <person name="Wei X."/>
            <person name="White F."/>
            <person name="Williamson A.L."/>
            <person name="Wleczyk R."/>
            <person name="Wooden H.S."/>
            <person name="Wooden S.H."/>
            <person name="Yen J."/>
            <person name="Yoon L."/>
            <person name="Yoon V."/>
            <person name="Zorrilla S.E."/>
            <person name="Nelson D."/>
            <person name="Kucherlapati R."/>
            <person name="Weinstock G."/>
            <person name="Gibbs R.A."/>
        </authorList>
    </citation>
    <scope>NUCLEOTIDE SEQUENCE [LARGE SCALE GENOMIC DNA]</scope>
</reference>
<reference key="3">
    <citation type="journal article" date="1999" name="DNA Res.">
        <title>Prediction of the coding sequences of unidentified human genes. XIV. The complete sequences of 100 new cDNA clones from brain which code for large proteins in vitro.</title>
        <authorList>
            <person name="Kikuno R."/>
            <person name="Nagase T."/>
            <person name="Ishikawa K."/>
            <person name="Hirosawa M."/>
            <person name="Miyajima N."/>
            <person name="Tanaka A."/>
            <person name="Kotani H."/>
            <person name="Nomura N."/>
            <person name="Ohara O."/>
        </authorList>
    </citation>
    <scope>NUCLEOTIDE SEQUENCE [LARGE SCALE MRNA] OF 1163-1966 (ISOFORM 1/2)</scope>
    <source>
        <tissue>Brain</tissue>
    </source>
</reference>
<reference key="4">
    <citation type="journal article" date="2007" name="J. Biol. Chem.">
        <title>Identification and characterization of the human Set1B histone H3-Lys4 methyltransferase complex.</title>
        <authorList>
            <person name="Lee J.-H."/>
            <person name="Tate C.M."/>
            <person name="You J.-S."/>
            <person name="Skalnik D.G."/>
        </authorList>
    </citation>
    <scope>FUNCTION</scope>
    <scope>CATALYTIC ACTIVITY</scope>
    <scope>SUBCELLULAR LOCATION</scope>
    <scope>IDENTIFICATION IN THE SET1 COMPLEX</scope>
</reference>
<reference key="5">
    <citation type="journal article" date="2008" name="Mol. Cell. Biol.">
        <title>Wdr82 is a C-terminal domain-binding protein that recruits the Setd1A Histone H3-Lys4 methyltransferase complex to transcription start sites of transcribed human genes.</title>
        <authorList>
            <person name="Lee J.H."/>
            <person name="Skalnik D.G."/>
        </authorList>
    </citation>
    <scope>IDENTIFICATION IN SET1 COMPLEX</scope>
    <scope>INTERACTION WITH WDR82; ASH2L AND POLR2A</scope>
</reference>
<reference key="6">
    <citation type="journal article" date="2008" name="Mol. Cell. Biol.">
        <title>Molecular regulation of H3K4 trimethylation by Wdr82, a component of human Set1/COMPASS.</title>
        <authorList>
            <person name="Wu M."/>
            <person name="Wang P.F."/>
            <person name="Lee J.S."/>
            <person name="Martin-Brown S."/>
            <person name="Florens L."/>
            <person name="Washburn M."/>
            <person name="Shilatifard A."/>
        </authorList>
    </citation>
    <scope>IDENTIFICATION IN SET1 COMPLEX</scope>
</reference>
<reference key="7">
    <citation type="journal article" date="2008" name="Proc. Natl. Acad. Sci. U.S.A.">
        <title>A quantitative atlas of mitotic phosphorylation.</title>
        <authorList>
            <person name="Dephoure N."/>
            <person name="Zhou C."/>
            <person name="Villen J."/>
            <person name="Beausoleil S.A."/>
            <person name="Bakalarski C.E."/>
            <person name="Elledge S.J."/>
            <person name="Gygi S.P."/>
        </authorList>
    </citation>
    <scope>IDENTIFICATION BY MASS SPECTROMETRY [LARGE SCALE ANALYSIS]</scope>
    <source>
        <tissue>Cervix carcinoma</tissue>
    </source>
</reference>
<reference key="8">
    <citation type="journal article" date="2009" name="Sci. Signal.">
        <title>Quantitative phosphoproteomic analysis of T cell receptor signaling reveals system-wide modulation of protein-protein interactions.</title>
        <authorList>
            <person name="Mayya V."/>
            <person name="Lundgren D.H."/>
            <person name="Hwang S.-I."/>
            <person name="Rezaul K."/>
            <person name="Wu L."/>
            <person name="Eng J.K."/>
            <person name="Rodionov V."/>
            <person name="Han D.K."/>
        </authorList>
    </citation>
    <scope>PHOSPHORYLATION [LARGE SCALE ANALYSIS] AT SER-1659</scope>
    <scope>IDENTIFICATION BY MASS SPECTROMETRY [LARGE SCALE ANALYSIS]</scope>
    <source>
        <tissue>Leukemic T-cell</tissue>
    </source>
</reference>
<reference key="9">
    <citation type="journal article" date="2013" name="J. Proteome Res.">
        <title>Toward a comprehensive characterization of a human cancer cell phosphoproteome.</title>
        <authorList>
            <person name="Zhou H."/>
            <person name="Di Palma S."/>
            <person name="Preisinger C."/>
            <person name="Peng M."/>
            <person name="Polat A.N."/>
            <person name="Heck A.J."/>
            <person name="Mohammed S."/>
        </authorList>
    </citation>
    <scope>PHOSPHORYLATION [LARGE SCALE ANALYSIS] AT SER-986; SER-994 AND SER-1031</scope>
    <scope>IDENTIFICATION BY MASS SPECTROMETRY [LARGE SCALE ANALYSIS]</scope>
    <source>
        <tissue>Cervix carcinoma</tissue>
        <tissue>Erythroleukemia</tissue>
    </source>
</reference>
<reference key="10">
    <citation type="journal article" date="2013" name="Mol. Cell. Biol.">
        <title>Quantitative dissection and stoichiometry determination of the human SET1/MLL histone methyltransferase complexes.</title>
        <authorList>
            <person name="van Nuland R."/>
            <person name="Smits A.H."/>
            <person name="Pallaki P."/>
            <person name="Jansen P.W."/>
            <person name="Vermeulen M."/>
            <person name="Timmers H.T."/>
        </authorList>
    </citation>
    <scope>IDENTIFICATION IN SET1B COMPLEX</scope>
</reference>
<reference key="11">
    <citation type="journal article" date="2014" name="J. Proteomics">
        <title>An enzyme assisted RP-RPLC approach for in-depth analysis of human liver phosphoproteome.</title>
        <authorList>
            <person name="Bian Y."/>
            <person name="Song C."/>
            <person name="Cheng K."/>
            <person name="Dong M."/>
            <person name="Wang F."/>
            <person name="Huang J."/>
            <person name="Sun D."/>
            <person name="Wang L."/>
            <person name="Ye M."/>
            <person name="Zou H."/>
        </authorList>
    </citation>
    <scope>PHOSPHORYLATION [LARGE SCALE ANALYSIS] AT SER-1335</scope>
    <scope>IDENTIFICATION BY MASS SPECTROMETRY [LARGE SCALE ANALYSIS]</scope>
    <source>
        <tissue>Liver</tissue>
    </source>
</reference>
<reference key="12">
    <citation type="journal article" date="2015" name="J. Biol. Chem.">
        <title>Biochemical reconstitution and phylogenetic comparison of human SET1 family core complexes involved in histone methylation.</title>
        <authorList>
            <person name="Shinsky S.A."/>
            <person name="Monteith K.E."/>
            <person name="Viggiano S."/>
            <person name="Cosgrove M.S."/>
        </authorList>
    </citation>
    <scope>FUNCTION</scope>
    <scope>CATALYTIC ACTIVITY</scope>
    <scope>SUBUNIT</scope>
    <scope>MUTAGENESIS OF ASN-1905</scope>
</reference>
<reference key="13">
    <citation type="journal article" date="2019" name="J. Hum. Genet.">
        <title>A novel de novo frameshift variant in SETD1B causes epilepsy.</title>
        <authorList>
            <person name="Den K."/>
            <person name="Kato M."/>
            <person name="Yamaguchi T."/>
            <person name="Miyatake S."/>
            <person name="Takata A."/>
            <person name="Mizuguchi T."/>
            <person name="Miyake N."/>
            <person name="Mitsuhashi S."/>
            <person name="Matsumoto N."/>
        </authorList>
    </citation>
    <scope>INVOLVEMENT IN IDDSELD</scope>
</reference>
<reference key="14">
    <citation type="journal article" date="2023" name="Int. J. Mol. Sci.">
        <title>In Vivo and In Vitro Characterization of the RNA Binding Capacity of SETD1A (KMT2F).</title>
        <authorList>
            <person name="Amin H.M."/>
            <person name="Szabo B."/>
            <person name="Abukhairan R."/>
            <person name="Zeke A."/>
            <person name="Kardos J."/>
            <person name="Schad E."/>
            <person name="Tantos A."/>
        </authorList>
    </citation>
    <scope>SUBCELLULAR LOCATION</scope>
</reference>
<reference evidence="28" key="15">
    <citation type="journal article" date="2012" name="J. Biol. Chem.">
        <title>Structural basis for WDR5 interaction (Win) motif recognition in human SET1 family histone methyltransferases.</title>
        <authorList>
            <person name="Dharmarajan V."/>
            <person name="Lee J.H."/>
            <person name="Patel A."/>
            <person name="Skalnik D.G."/>
            <person name="Cosgrove M.S."/>
        </authorList>
    </citation>
    <scope>X-RAY CRYSTALLOGRAPHY (1.82 ANGSTROMS) OF 1741-1754 IN COMPLEX WITH WDR5</scope>
    <scope>INTERACTION WITH WDR5</scope>
    <scope>MOTIF WIN</scope>
</reference>
<reference evidence="27" key="16">
    <citation type="journal article" date="2012" name="Nucleic Acids Res.">
        <title>The plasticity of WDR5 peptide-binding cleft enables the binding of the SET1 family of histone methyltransferases.</title>
        <authorList>
            <person name="Zhang P."/>
            <person name="Lee H."/>
            <person name="Brunzelle J.S."/>
            <person name="Couture J.F."/>
        </authorList>
    </citation>
    <scope>X-RAY CRYSTALLOGRAPHY (2.20 ANGSTROMS) OF 1745-1755 IN COMPLEX WITH WDR5</scope>
    <scope>INTERACTION WITH WDR5</scope>
    <scope>MOTIF WIN</scope>
</reference>
<reference evidence="29" key="17">
    <citation type="journal article" date="2023" name="Biochem. Biophys. Res. Commun.">
        <title>Molecular insight into the SETD1A/B N-terminal region and its interaction with WDR82.</title>
        <authorList>
            <person name="Bao S."/>
            <person name="Xu C."/>
        </authorList>
    </citation>
    <scope>X-RAY CRYSTALLOGRAPHY (1.77 ANGSTROMS) OF 102-204</scope>
    <scope>INTERACTION WITH WDR82</scope>
</reference>
<reference key="18">
    <citation type="journal article" date="2018" name="Hum. Genet.">
        <title>De novo variants in SETD1B are associated with intellectual disability, epilepsy and autism.</title>
        <authorList>
            <person name="Hiraide T."/>
            <person name="Nakashima M."/>
            <person name="Yamoto K."/>
            <person name="Fukuda T."/>
            <person name="Kato M."/>
            <person name="Ikeda H."/>
            <person name="Sugie Y."/>
            <person name="Aoto K."/>
            <person name="Kaname T."/>
            <person name="Nakabayashi K."/>
            <person name="Ogata T."/>
            <person name="Matsumoto N."/>
            <person name="Saitsu H."/>
        </authorList>
    </citation>
    <scope>VARIANTS IDDSELD TRP-1885 AND CYS-1902</scope>
    <scope>INVOLVEMENT IN IDDSELD</scope>
</reference>
<reference key="19">
    <citation type="journal article" date="2019" name="Clin. Epigenetics">
        <title>A genome-wide DNA methylation signature for SETD1B-related syndrome.</title>
        <authorList>
            <person name="Krzyzewska I.M."/>
            <person name="Maas S.M."/>
            <person name="Henneman P."/>
            <person name="Lip K.V.D."/>
            <person name="Venema A."/>
            <person name="Baranano K."/>
            <person name="Chassevent A."/>
            <person name="Aref-Eshghi E."/>
            <person name="van Essen A.J."/>
            <person name="Fukuda T."/>
            <person name="Ikeda H."/>
            <person name="Jacquemont M."/>
            <person name="Kim H.G."/>
            <person name="Labalme A."/>
            <person name="Lewis S.M.E."/>
            <person name="Lesca G."/>
            <person name="Madrigal I."/>
            <person name="Mahida S."/>
            <person name="Matsumoto N."/>
            <person name="Rabionet R."/>
            <person name="Rajcan-Separovic E."/>
            <person name="Qiao Y."/>
            <person name="Sadikovic B."/>
            <person name="Saitsu H."/>
            <person name="Sweetser D.A."/>
            <person name="Alders M."/>
            <person name="Mannens M.M.A.M."/>
        </authorList>
    </citation>
    <scope>VARIANTS IDDSELD TRP-1885 AND CYS-1902</scope>
</reference>
<reference key="20">
    <citation type="journal article" date="2019" name="Epilepsia Open">
        <title>De novo variants in SETD1B cause intellectual disability, autism spectrum disorder, and epilepsy with myoclonic absences.</title>
        <authorList>
            <person name="Hiraide T."/>
            <person name="Hattori A."/>
            <person name="Ieda D."/>
            <person name="Hori I."/>
            <person name="Saitoh S."/>
            <person name="Nakashima M."/>
            <person name="Saitsu H."/>
        </authorList>
    </citation>
    <scope>VARIANT IDDSELD GLY-129</scope>
</reference>
<reference key="21">
    <citation type="journal article" date="2021" name="J. Med. Genet.">
        <title>SETD1B-associated neurodevelopmental disorder.</title>
        <authorList>
            <consortium name="CAUSES Study"/>
            <consortium name="EPGEN Study"/>
            <person name="Roston A."/>
            <person name="Evans D."/>
            <person name="Gill H."/>
            <person name="McKinnon M."/>
            <person name="Isidor B."/>
            <person name="Cogne B."/>
            <person name="Mwenifumbo J."/>
            <person name="van Karnebeek C."/>
            <person name="An J."/>
            <person name="Jones S.J.M."/>
            <person name="Farrer M."/>
            <person name="Demos M."/>
            <person name="Connolly M."/>
            <person name="Gibson W.T."/>
        </authorList>
    </citation>
    <scope>VARIANTS IDDSELD 978-GLN--ASN-1966 DEL; 1322-GLN--ASN-1966 DEL AND LEU-1945</scope>
</reference>
<proteinExistence type="evidence at protein level"/>
<sequence length="1966" mass="212803">MENSHPPHHHHQQPPPQPGPSGERRNHHWRSYKLMIDPALKKGHHKLYRYDGQHFSLAMSSNRPVEIVEDPRVVGIWTKNKELELSVPKFKIDEFYVGPVPPKQVTFAKLNDNIRENFLRDMCKKYGEVEEVEILYNPKTKKHLGIAKVVFATVRGAKDAVQHLHSTSVMGNIIHVELDTKGETRMRFYELLVTGRYTPQTLPVGELDAVSPIVNETLQLSDALKRLKDGGLSAGCGSGSSSVTPNSGGTPFSQDTAYSSCRLDTPNSYGQGTPLTPRLGTPFSQDSSYSSRQPTPSYLFSQDPAVTFKARRHESKFTDAYNRRHEHHYVHNSPAVTAVAGATAAFRGSSDLPFGAVGGTGGSSGPPFKAQPQDSATFAHTPPPAQATPAPGFKSAFSPYQTPVAHFPPPPEEPTATAAFGARDSGEFRRAPAPPPLPPAEPLAKEKPGTPPGPPPPDTNSMELGGRPTFGWSPEPCDSPGTPTLESSPAGPEKPHDSLDSRIEMLLKEQRTKLLFLREPDSDTELQMEGSPISSSSSQLSPLAPFGTNSQPGFRGPTPPSSRPSSTGLEDISPTPLPDSDEDEELDLGLGPRPPPEPGPPDPAGLLSQTAEVALDLVGDRTPTSEKMDEGQQSSGEDMEISDDEMPSAPITSADCPKPMVVTPGAAAVAAPSVLAPTLPLPPPPGFPPLPPPPPPPPPQPGFPMPPPLPPPPPPPPPAHPAVTVPPPPLPAPPGVPPPPILPPLPPFPPGLFPVMQVDMSHVLGGQWGGMPMSFQMQTQVLSRLMTGQGACPYPPFMAAAAAAASAGLQFVNLPPYRGPFSLSNSGPGRGQHWPPLPKFDPSVPPPGYMPRQEDPHKATVDGVLLVVLKELKAIMKRDLNRKMVEVVAFRAFDEWWDKKERMAKASLTPVKSGEHKDEDRPKPKDRIASCLLESWGKGEGLGYEGLGLGIGLRGAIRLPSFKVKRKEPPDTTSSGDQKRLRPSTSVDEEDEESERERDRDMADTPCELAKRDPKGVGVRRRPARPLELDSGGEEDEKESLSASSSSSASSSSGSSTTSPSSSASDKEEEQESTEEEEEAEEEEEEEVPRSQLSSSSTSSTSDKDDDDDDSDDRDESENDDEDTALSEASEKDEGDSDEEETVSIVTSKAEATSSSESSESSEFESSSESSPSSSEDEEEVVAREEEEEEEEEEMVAEESMASAGPEDFEQDGEEAALAPGAPAVDSLGMEEEVDIETEAVAPEERPSMLDEPPLPVGVEEPADSREPPEEPGLSQEGAMLLSPEPPAKEVEARPPLSPERAPEHDLEVEPEPPMMLPLPLQPPLPPPRPPRPPSPPPEPETTDASHPSVPPEPLAEDHPPHTPGLCGSLAKSQSTETVPATPGGEPPLSGGSSGLSLSSPQVPGSPFSYPAPSPSLSSGGLPRTPGRDFSFTPTFSEPSGPLLLPVCPLPTGRRDERSGPLASPVLLETGLPLPLPLPLPLPLALPAVLRAQARAPTPLPPLLPAPLASCPPPMKRKPGRPRRSPPSMLSLDGPLVRPPAGAALGRELLLLPGQPQTPVFPSTHDPRTVTLDFRNAGIPAPPPPLPPQPPPPPPPPPVEPTKLPFKELDNQWPSEAIPPGPRGRDEVTEEYMELAKSRGPWRRPPKKRHEDLVPPAGSPELSPPQPLFRPRSEFEEMTILYDIWNGGIDEEDIRFLCVTYERLLQQDNGMDWLNDTLWVYHPSTSLSSAKKKKRDDGIREHVTGCARSEGFYTIDKKDKLRYLNSSRASTDEPPADTQGMSIPAQPHASTRAGSERRSEQRRLLSSFTGSCDSDLLKFNQLKFRKKKLKFCKSHIHDWGLFAMEPIAADEMVIEYVGQNIRQVIADMREKRYEDEGIGSSYMFRVDHDTIIDATKCGNFARFINHSCNPNCYAKVITVESQKKIVIYSKQHINVNEEITYDYKFPIEDVKIPCLCGSENCRGTLN</sequence>
<accession>Q9UPS6</accession>
<accession>F6MFW1</accession>
<organism>
    <name type="scientific">Homo sapiens</name>
    <name type="common">Human</name>
    <dbReference type="NCBI Taxonomy" id="9606"/>
    <lineage>
        <taxon>Eukaryota</taxon>
        <taxon>Metazoa</taxon>
        <taxon>Chordata</taxon>
        <taxon>Craniata</taxon>
        <taxon>Vertebrata</taxon>
        <taxon>Euteleostomi</taxon>
        <taxon>Mammalia</taxon>
        <taxon>Eutheria</taxon>
        <taxon>Euarchontoglires</taxon>
        <taxon>Primates</taxon>
        <taxon>Haplorrhini</taxon>
        <taxon>Catarrhini</taxon>
        <taxon>Hominidae</taxon>
        <taxon>Homo</taxon>
    </lineage>
</organism>
<evidence type="ECO:0000250" key="1">
    <source>
        <dbReference type="UniProtKB" id="P38827"/>
    </source>
</evidence>
<evidence type="ECO:0000250" key="2">
    <source>
        <dbReference type="UniProtKB" id="Q8CFT2"/>
    </source>
</evidence>
<evidence type="ECO:0000255" key="3"/>
<evidence type="ECO:0000255" key="4">
    <source>
        <dbReference type="PROSITE-ProRule" id="PRU00155"/>
    </source>
</evidence>
<evidence type="ECO:0000255" key="5">
    <source>
        <dbReference type="PROSITE-ProRule" id="PRU00176"/>
    </source>
</evidence>
<evidence type="ECO:0000255" key="6">
    <source>
        <dbReference type="PROSITE-ProRule" id="PRU00190"/>
    </source>
</evidence>
<evidence type="ECO:0000256" key="7">
    <source>
        <dbReference type="SAM" id="MobiDB-lite"/>
    </source>
</evidence>
<evidence type="ECO:0000269" key="8">
    <source>
    </source>
</evidence>
<evidence type="ECO:0000269" key="9">
    <source>
    </source>
</evidence>
<evidence type="ECO:0000269" key="10">
    <source>
    </source>
</evidence>
<evidence type="ECO:0000269" key="11">
    <source>
    </source>
</evidence>
<evidence type="ECO:0000269" key="12">
    <source>
    </source>
</evidence>
<evidence type="ECO:0000269" key="13">
    <source>
    </source>
</evidence>
<evidence type="ECO:0000269" key="14">
    <source>
    </source>
</evidence>
<evidence type="ECO:0000269" key="15">
    <source>
    </source>
</evidence>
<evidence type="ECO:0000269" key="16">
    <source>
    </source>
</evidence>
<evidence type="ECO:0000269" key="17">
    <source>
    </source>
</evidence>
<evidence type="ECO:0000269" key="18">
    <source>
    </source>
</evidence>
<evidence type="ECO:0000269" key="19">
    <source>
    </source>
</evidence>
<evidence type="ECO:0000269" key="20">
    <source>
    </source>
</evidence>
<evidence type="ECO:0000269" key="21">
    <source>
    </source>
</evidence>
<evidence type="ECO:0000269" key="22">
    <source>
    </source>
</evidence>
<evidence type="ECO:0000305" key="23"/>
<evidence type="ECO:0000305" key="24">
    <source>
    </source>
</evidence>
<evidence type="ECO:0000305" key="25">
    <source>
    </source>
</evidence>
<evidence type="ECO:0000305" key="26">
    <source>
    </source>
</evidence>
<evidence type="ECO:0007744" key="27">
    <source>
        <dbReference type="PDB" id="3UVO"/>
    </source>
</evidence>
<evidence type="ECO:0007744" key="28">
    <source>
        <dbReference type="PDB" id="4ES0"/>
    </source>
</evidence>
<evidence type="ECO:0007744" key="29">
    <source>
        <dbReference type="PDB" id="8ILZ"/>
    </source>
</evidence>
<evidence type="ECO:0007744" key="30">
    <source>
    </source>
</evidence>
<evidence type="ECO:0007744" key="31">
    <source>
    </source>
</evidence>
<evidence type="ECO:0007744" key="32">
    <source>
    </source>
</evidence>
<evidence type="ECO:0007829" key="33">
    <source>
        <dbReference type="PDB" id="4ES0"/>
    </source>
</evidence>
<evidence type="ECO:0007829" key="34">
    <source>
        <dbReference type="PDB" id="8ILZ"/>
    </source>
</evidence>
<keyword id="KW-0002">3D-structure</keyword>
<keyword id="KW-0010">Activator</keyword>
<keyword id="KW-0025">Alternative splicing</keyword>
<keyword id="KW-0156">Chromatin regulator</keyword>
<keyword id="KW-0158">Chromosome</keyword>
<keyword id="KW-0175">Coiled coil</keyword>
<keyword id="KW-0963">Cytoplasm</keyword>
<keyword id="KW-0225">Disease variant</keyword>
<keyword id="KW-0887">Epilepsy</keyword>
<keyword id="KW-0991">Intellectual disability</keyword>
<keyword id="KW-0489">Methyltransferase</keyword>
<keyword id="KW-0539">Nucleus</keyword>
<keyword id="KW-0597">Phosphoprotein</keyword>
<keyword id="KW-1267">Proteomics identification</keyword>
<keyword id="KW-1185">Reference proteome</keyword>
<keyword id="KW-0694">RNA-binding</keyword>
<keyword id="KW-0949">S-adenosyl-L-methionine</keyword>
<keyword id="KW-0804">Transcription</keyword>
<keyword id="KW-0805">Transcription regulation</keyword>
<keyword id="KW-0808">Transferase</keyword>
<feature type="chain" id="PRO_0000316993" description="Histone-lysine N-methyltransferase SETD1B">
    <location>
        <begin position="1"/>
        <end position="1966"/>
    </location>
</feature>
<feature type="domain" description="RRM" evidence="5">
    <location>
        <begin position="93"/>
        <end position="181"/>
    </location>
</feature>
<feature type="domain" description="SET" evidence="6">
    <location>
        <begin position="1827"/>
        <end position="1944"/>
    </location>
</feature>
<feature type="domain" description="Post-SET" evidence="4">
    <location>
        <begin position="1950"/>
        <end position="1966"/>
    </location>
</feature>
<feature type="region of interest" description="Disordered" evidence="7">
    <location>
        <begin position="1"/>
        <end position="26"/>
    </location>
</feature>
<feature type="region of interest" description="Interaction with WDR82" evidence="21">
    <location>
        <begin position="68"/>
        <end position="98"/>
    </location>
</feature>
<feature type="region of interest" description="Disordered" evidence="7">
    <location>
        <begin position="235"/>
        <end position="302"/>
    </location>
</feature>
<feature type="region of interest" description="Disordered" evidence="7">
    <location>
        <begin position="357"/>
        <end position="660"/>
    </location>
</feature>
<feature type="region of interest" description="Disordered" evidence="7">
    <location>
        <begin position="675"/>
        <end position="719"/>
    </location>
</feature>
<feature type="region of interest" description="Disordered" evidence="7">
    <location>
        <begin position="963"/>
        <end position="1462"/>
    </location>
</feature>
<feature type="region of interest" description="Disordered" evidence="7">
    <location>
        <begin position="1501"/>
        <end position="1541"/>
    </location>
</feature>
<feature type="region of interest" description="Disordered" evidence="7">
    <location>
        <begin position="1555"/>
        <end position="1606"/>
    </location>
</feature>
<feature type="region of interest" description="Disordered" evidence="7">
    <location>
        <begin position="1636"/>
        <end position="1668"/>
    </location>
</feature>
<feature type="region of interest" description="Disordered" evidence="7">
    <location>
        <begin position="1767"/>
        <end position="1800"/>
    </location>
</feature>
<feature type="coiled-coil region" evidence="3">
    <location>
        <begin position="1173"/>
        <end position="1204"/>
    </location>
</feature>
<feature type="short sequence motif" description="WDR5 interaction motif (WIN)" evidence="11 12">
    <location>
        <begin position="1745"/>
        <end position="1750"/>
    </location>
</feature>
<feature type="short sequence motif" description="RxxxRR motif" evidence="1">
    <location>
        <begin position="1798"/>
        <end position="1803"/>
    </location>
</feature>
<feature type="compositionally biased region" description="Basic residues" evidence="7">
    <location>
        <begin position="1"/>
        <end position="12"/>
    </location>
</feature>
<feature type="compositionally biased region" description="Polar residues" evidence="7">
    <location>
        <begin position="243"/>
        <end position="259"/>
    </location>
</feature>
<feature type="compositionally biased region" description="Polar residues" evidence="7">
    <location>
        <begin position="265"/>
        <end position="274"/>
    </location>
</feature>
<feature type="compositionally biased region" description="Polar residues" evidence="7">
    <location>
        <begin position="282"/>
        <end position="300"/>
    </location>
</feature>
<feature type="compositionally biased region" description="Pro residues" evidence="7">
    <location>
        <begin position="432"/>
        <end position="441"/>
    </location>
</feature>
<feature type="compositionally biased region" description="Pro residues" evidence="7">
    <location>
        <begin position="449"/>
        <end position="458"/>
    </location>
</feature>
<feature type="compositionally biased region" description="Basic and acidic residues" evidence="7">
    <location>
        <begin position="493"/>
        <end position="521"/>
    </location>
</feature>
<feature type="compositionally biased region" description="Low complexity" evidence="7">
    <location>
        <begin position="531"/>
        <end position="543"/>
    </location>
</feature>
<feature type="compositionally biased region" description="Pro residues" evidence="7">
    <location>
        <begin position="592"/>
        <end position="603"/>
    </location>
</feature>
<feature type="compositionally biased region" description="Acidic residues" evidence="7">
    <location>
        <begin position="637"/>
        <end position="646"/>
    </location>
</feature>
<feature type="compositionally biased region" description="Pro residues" evidence="7">
    <location>
        <begin position="679"/>
        <end position="719"/>
    </location>
</feature>
<feature type="compositionally biased region" description="Basic and acidic residues" evidence="7">
    <location>
        <begin position="995"/>
        <end position="1015"/>
    </location>
</feature>
<feature type="compositionally biased region" description="Low complexity" evidence="7">
    <location>
        <begin position="1041"/>
        <end position="1064"/>
    </location>
</feature>
<feature type="compositionally biased region" description="Acidic residues" evidence="7">
    <location>
        <begin position="1067"/>
        <end position="1087"/>
    </location>
</feature>
<feature type="compositionally biased region" description="Acidic residues" evidence="7">
    <location>
        <begin position="1104"/>
        <end position="1142"/>
    </location>
</feature>
<feature type="compositionally biased region" description="Low complexity" evidence="7">
    <location>
        <begin position="1148"/>
        <end position="1174"/>
    </location>
</feature>
<feature type="compositionally biased region" description="Acidic residues" evidence="7">
    <location>
        <begin position="1175"/>
        <end position="1197"/>
    </location>
</feature>
<feature type="compositionally biased region" description="Acidic residues" evidence="7">
    <location>
        <begin position="1229"/>
        <end position="1238"/>
    </location>
</feature>
<feature type="compositionally biased region" description="Pro residues" evidence="7">
    <location>
        <begin position="1312"/>
        <end position="1340"/>
    </location>
</feature>
<feature type="compositionally biased region" description="Low complexity" evidence="7">
    <location>
        <begin position="1383"/>
        <end position="1425"/>
    </location>
</feature>
<feature type="compositionally biased region" description="Pro residues" evidence="7">
    <location>
        <begin position="1501"/>
        <end position="1514"/>
    </location>
</feature>
<feature type="compositionally biased region" description="Basic residues" evidence="7">
    <location>
        <begin position="1515"/>
        <end position="1524"/>
    </location>
</feature>
<feature type="compositionally biased region" description="Pro residues" evidence="7">
    <location>
        <begin position="1580"/>
        <end position="1600"/>
    </location>
</feature>
<feature type="binding site" evidence="6">
    <location>
        <position position="1943"/>
    </location>
    <ligand>
        <name>S-adenosyl-L-methionine</name>
        <dbReference type="ChEBI" id="CHEBI:59789"/>
    </ligand>
</feature>
<feature type="modified residue" description="Phosphoserine" evidence="31">
    <location>
        <position position="986"/>
    </location>
</feature>
<feature type="modified residue" description="Phosphoserine" evidence="31">
    <location>
        <position position="994"/>
    </location>
</feature>
<feature type="modified residue" description="Phosphoserine" evidence="31">
    <location>
        <position position="1031"/>
    </location>
</feature>
<feature type="modified residue" description="Phosphoserine" evidence="2">
    <location>
        <position position="1265"/>
    </location>
</feature>
<feature type="modified residue" description="Phosphoserine" evidence="2">
    <location>
        <position position="1283"/>
    </location>
</feature>
<feature type="modified residue" description="Phosphoserine" evidence="32">
    <location>
        <position position="1335"/>
    </location>
</feature>
<feature type="modified residue" description="Phosphoserine" evidence="30">
    <location>
        <position position="1659"/>
    </location>
</feature>
<feature type="modified residue" description="Phosphoserine" evidence="2">
    <location>
        <position position="1663"/>
    </location>
</feature>
<feature type="splice variant" id="VSP_053875" description="In isoform 2." evidence="23">
    <location>
        <begin position="1043"/>
        <end position="1068"/>
    </location>
</feature>
<feature type="splice variant" id="VSP_053876" description="In isoform 2." evidence="23">
    <location>
        <begin position="1088"/>
        <end position="1104"/>
    </location>
</feature>
<feature type="sequence variant" id="VAR_084717" description="In IDDSELD." evidence="18">
    <original>V</original>
    <variation>G</variation>
    <location>
        <position position="129"/>
    </location>
</feature>
<feature type="sequence variant" id="VAR_084718" description="In IDDSELD." evidence="20">
    <location>
        <begin position="978"/>
        <end position="1966"/>
    </location>
</feature>
<feature type="sequence variant" id="VAR_084719" description="In IDDSELD." evidence="20">
    <location>
        <begin position="1322"/>
        <end position="1966"/>
    </location>
</feature>
<feature type="sequence variant" id="VAR_084720" description="In IDDSELD." evidence="16 19">
    <original>R</original>
    <variation>W</variation>
    <location>
        <position position="1885"/>
    </location>
</feature>
<feature type="sequence variant" id="VAR_084721" description="In IDDSELD." evidence="16 19">
    <original>R</original>
    <variation>C</variation>
    <location>
        <position position="1902"/>
    </location>
</feature>
<feature type="sequence variant" id="VAR_084722" description="In IDDSELD." evidence="20">
    <original>F</original>
    <variation>L</variation>
    <location>
        <position position="1945"/>
    </location>
</feature>
<feature type="mutagenesis site" description="Abolishes interaction with RBM15." evidence="13">
    <original>L</original>
    <variation>A</variation>
    <location>
        <position position="577"/>
    </location>
</feature>
<feature type="mutagenesis site" description="Abolishes interaction with RBM15." evidence="13">
    <original>D</original>
    <variation>A</variation>
    <location>
        <position position="579"/>
    </location>
</feature>
<feature type="mutagenesis site" description="Abolishes interaction with S-adenosyl-L-methionine." evidence="15">
    <original>N</original>
    <variation>A</variation>
    <location>
        <position position="1905"/>
    </location>
</feature>
<feature type="strand" evidence="34">
    <location>
        <begin position="104"/>
        <end position="109"/>
    </location>
</feature>
<feature type="helix" evidence="34">
    <location>
        <begin position="116"/>
        <end position="124"/>
    </location>
</feature>
<feature type="strand" evidence="34">
    <location>
        <begin position="129"/>
        <end position="136"/>
    </location>
</feature>
<feature type="turn" evidence="34">
    <location>
        <begin position="138"/>
        <end position="140"/>
    </location>
</feature>
<feature type="strand" evidence="34">
    <location>
        <begin position="143"/>
        <end position="153"/>
    </location>
</feature>
<feature type="helix" evidence="34">
    <location>
        <begin position="154"/>
        <end position="164"/>
    </location>
</feature>
<feature type="strand" evidence="34">
    <location>
        <begin position="175"/>
        <end position="178"/>
    </location>
</feature>
<feature type="helix" evidence="34">
    <location>
        <begin position="183"/>
        <end position="193"/>
    </location>
</feature>
<feature type="turn" evidence="34">
    <location>
        <begin position="199"/>
        <end position="201"/>
    </location>
</feature>
<feature type="helix" evidence="33">
    <location>
        <begin position="1747"/>
        <end position="1750"/>
    </location>
</feature>
<gene>
    <name type="primary">SETD1B</name>
    <name type="synonym">KIAA1076</name>
    <name type="synonym">KMT2G</name>
    <name type="synonym">SET1B</name>
</gene>
<name>SET1B_HUMAN</name>
<dbReference type="EC" id="2.1.1.364" evidence="15"/>
<dbReference type="EMBL" id="JF813787">
    <property type="protein sequence ID" value="AEG67286.1"/>
    <property type="molecule type" value="mRNA"/>
</dbReference>
<dbReference type="EMBL" id="AC079360">
    <property type="status" value="NOT_ANNOTATED_CDS"/>
    <property type="molecule type" value="Genomic_DNA"/>
</dbReference>
<dbReference type="EMBL" id="AC084018">
    <property type="status" value="NOT_ANNOTATED_CDS"/>
    <property type="molecule type" value="Genomic_DNA"/>
</dbReference>
<dbReference type="EMBL" id="AB028999">
    <property type="protein sequence ID" value="BAA83028.1"/>
    <property type="molecule type" value="mRNA"/>
</dbReference>
<dbReference type="CCDS" id="CCDS86338.1">
    <molecule id="Q9UPS6-1"/>
</dbReference>
<dbReference type="RefSeq" id="NP_001340274.1">
    <molecule id="Q9UPS6-1"/>
    <property type="nucleotide sequence ID" value="NM_001353345.2"/>
</dbReference>
<dbReference type="RefSeq" id="NP_055863.1">
    <property type="nucleotide sequence ID" value="NM_015048.1"/>
</dbReference>
<dbReference type="RefSeq" id="XP_005253915.1">
    <property type="nucleotide sequence ID" value="XM_005253858.4"/>
</dbReference>
<dbReference type="RefSeq" id="XP_006719359.1">
    <property type="nucleotide sequence ID" value="XM_006719296.3"/>
</dbReference>
<dbReference type="RefSeq" id="XP_024304666.1">
    <molecule id="Q9UPS6-1"/>
    <property type="nucleotide sequence ID" value="XM_024448898.2"/>
</dbReference>
<dbReference type="RefSeq" id="XP_047284508.1">
    <molecule id="Q9UPS6-1"/>
    <property type="nucleotide sequence ID" value="XM_047428552.1"/>
</dbReference>
<dbReference type="RefSeq" id="XP_047284509.1">
    <molecule id="Q9UPS6-1"/>
    <property type="nucleotide sequence ID" value="XM_047428553.1"/>
</dbReference>
<dbReference type="RefSeq" id="XP_054227457.1">
    <molecule id="Q9UPS6-1"/>
    <property type="nucleotide sequence ID" value="XM_054371482.1"/>
</dbReference>
<dbReference type="RefSeq" id="XP_054227458.1">
    <molecule id="Q9UPS6-1"/>
    <property type="nucleotide sequence ID" value="XM_054371483.1"/>
</dbReference>
<dbReference type="PDB" id="3UVO">
    <property type="method" value="X-ray"/>
    <property type="resolution" value="2.20 A"/>
    <property type="chains" value="B=1745-1755"/>
</dbReference>
<dbReference type="PDB" id="4ES0">
    <property type="method" value="X-ray"/>
    <property type="resolution" value="1.82 A"/>
    <property type="chains" value="C=1741-1754"/>
</dbReference>
<dbReference type="PDB" id="8ILZ">
    <property type="method" value="X-ray"/>
    <property type="resolution" value="1.77 A"/>
    <property type="chains" value="A=102-204"/>
</dbReference>
<dbReference type="PDB" id="8WXV">
    <property type="method" value="X-ray"/>
    <property type="resolution" value="2.40 A"/>
    <property type="chains" value="B/D=1745-1754"/>
</dbReference>
<dbReference type="PDBsum" id="3UVO"/>
<dbReference type="PDBsum" id="4ES0"/>
<dbReference type="PDBsum" id="8ILZ"/>
<dbReference type="PDBsum" id="8WXV"/>
<dbReference type="SMR" id="Q9UPS6"/>
<dbReference type="BioGRID" id="116702">
    <property type="interactions" value="77"/>
</dbReference>
<dbReference type="ComplexPortal" id="CPX-7111">
    <property type="entry name" value="Histone-lysine N-methyltransferase complex, SET1B variant"/>
</dbReference>
<dbReference type="CORUM" id="Q9UPS6"/>
<dbReference type="DIP" id="DIP-61947N"/>
<dbReference type="ELM" id="Q9UPS6"/>
<dbReference type="FunCoup" id="Q9UPS6">
    <property type="interactions" value="1951"/>
</dbReference>
<dbReference type="IntAct" id="Q9UPS6">
    <property type="interactions" value="29"/>
</dbReference>
<dbReference type="MINT" id="Q9UPS6"/>
<dbReference type="STRING" id="9606.ENSP00000474253"/>
<dbReference type="BindingDB" id="Q9UPS6"/>
<dbReference type="ChEMBL" id="CHEMBL4105837"/>
<dbReference type="GlyCosmos" id="Q9UPS6">
    <property type="glycosylation" value="1 site, 1 glycan"/>
</dbReference>
<dbReference type="GlyGen" id="Q9UPS6">
    <property type="glycosylation" value="11 sites, 1 O-linked glycan (3 sites)"/>
</dbReference>
<dbReference type="iPTMnet" id="Q9UPS6"/>
<dbReference type="PhosphoSitePlus" id="Q9UPS6"/>
<dbReference type="BioMuta" id="SETD1B"/>
<dbReference type="DMDM" id="166977692"/>
<dbReference type="jPOST" id="Q9UPS6"/>
<dbReference type="MassIVE" id="Q9UPS6"/>
<dbReference type="PaxDb" id="9606-ENSP00000442924"/>
<dbReference type="PeptideAtlas" id="Q9UPS6"/>
<dbReference type="ProteomicsDB" id="85430">
    <molecule id="Q9UPS6-1"/>
</dbReference>
<dbReference type="Pumba" id="Q9UPS6"/>
<dbReference type="Antibodypedia" id="9774">
    <property type="antibodies" value="116 antibodies from 26 providers"/>
</dbReference>
<dbReference type="Ensembl" id="ENST00000542440.5">
    <molecule id="Q9UPS6-2"/>
    <property type="protein sequence ID" value="ENSP00000442924.1"/>
    <property type="gene ID" value="ENSG00000139718.12"/>
</dbReference>
<dbReference type="Ensembl" id="ENST00000604567.6">
    <molecule id="Q9UPS6-1"/>
    <property type="protein sequence ID" value="ENSP00000474253.1"/>
    <property type="gene ID" value="ENSG00000139718.12"/>
</dbReference>
<dbReference type="Ensembl" id="ENST00000619791.1">
    <molecule id="Q9UPS6-1"/>
    <property type="protein sequence ID" value="ENSP00000481531.1"/>
    <property type="gene ID" value="ENSG00000139718.12"/>
</dbReference>
<dbReference type="GeneID" id="23067"/>
<dbReference type="MANE-Select" id="ENST00000604567.6">
    <property type="protein sequence ID" value="ENSP00000474253.1"/>
    <property type="RefSeq nucleotide sequence ID" value="NM_001353345.2"/>
    <property type="RefSeq protein sequence ID" value="NP_001340274.1"/>
</dbReference>
<dbReference type="UCSC" id="uc021rfg.2">
    <molecule id="Q9UPS6-1"/>
    <property type="organism name" value="human"/>
</dbReference>
<dbReference type="AGR" id="HGNC:29187"/>
<dbReference type="DisGeNET" id="23067"/>
<dbReference type="GeneCards" id="SETD1B"/>
<dbReference type="GeneReviews" id="SETD1B"/>
<dbReference type="HGNC" id="HGNC:29187">
    <property type="gene designation" value="SETD1B"/>
</dbReference>
<dbReference type="HPA" id="ENSG00000139718">
    <property type="expression patterns" value="Low tissue specificity"/>
</dbReference>
<dbReference type="MalaCards" id="SETD1B"/>
<dbReference type="MIM" id="611055">
    <property type="type" value="gene"/>
</dbReference>
<dbReference type="MIM" id="619000">
    <property type="type" value="phenotype"/>
</dbReference>
<dbReference type="neXtProt" id="NX_Q9UPS6"/>
<dbReference type="OpenTargets" id="ENSG00000139718"/>
<dbReference type="Orphanet" id="178469">
    <property type="disease" value="Autosomal dominant non-syndromic intellectual disability"/>
</dbReference>
<dbReference type="PharmGKB" id="PA143485611"/>
<dbReference type="VEuPathDB" id="HostDB:ENSG00000139718"/>
<dbReference type="eggNOG" id="KOG1080">
    <property type="taxonomic scope" value="Eukaryota"/>
</dbReference>
<dbReference type="GeneTree" id="ENSGT00940000154575"/>
<dbReference type="HOGENOM" id="CLU_001226_0_0_1"/>
<dbReference type="InParanoid" id="Q9UPS6"/>
<dbReference type="OMA" id="LPCMHGD"/>
<dbReference type="OrthoDB" id="308383at2759"/>
<dbReference type="PAN-GO" id="Q9UPS6">
    <property type="GO annotations" value="2 GO annotations based on evolutionary models"/>
</dbReference>
<dbReference type="PhylomeDB" id="Q9UPS6"/>
<dbReference type="TreeFam" id="TF106436"/>
<dbReference type="BioCyc" id="MetaCyc:HS13795-MONOMER"/>
<dbReference type="PathwayCommons" id="Q9UPS6"/>
<dbReference type="Reactome" id="R-HSA-3214841">
    <property type="pathway name" value="PKMTs methylate histone lysines"/>
</dbReference>
<dbReference type="Reactome" id="R-HSA-8936459">
    <property type="pathway name" value="RUNX1 regulates genes involved in megakaryocyte differentiation and platelet function"/>
</dbReference>
<dbReference type="Reactome" id="R-HSA-9772755">
    <property type="pathway name" value="Formation of WDR5-containing histone-modifying complexes"/>
</dbReference>
<dbReference type="SignaLink" id="Q9UPS6"/>
<dbReference type="SIGNOR" id="Q9UPS6"/>
<dbReference type="BioGRID-ORCS" id="23067">
    <property type="hits" value="129 hits in 1180 CRISPR screens"/>
</dbReference>
<dbReference type="CD-CODE" id="804901D1">
    <property type="entry name" value="Nuclear speckle"/>
</dbReference>
<dbReference type="EvolutionaryTrace" id="Q9UPS6"/>
<dbReference type="GenomeRNAi" id="23067"/>
<dbReference type="Pharos" id="Q9UPS6">
    <property type="development level" value="Tbio"/>
</dbReference>
<dbReference type="PRO" id="PR:Q9UPS6"/>
<dbReference type="Proteomes" id="UP000005640">
    <property type="component" value="Chromosome 12"/>
</dbReference>
<dbReference type="RNAct" id="Q9UPS6">
    <property type="molecule type" value="protein"/>
</dbReference>
<dbReference type="Bgee" id="ENSG00000139718">
    <property type="expression patterns" value="Expressed in blood vessel layer and 205 other cell types or tissues"/>
</dbReference>
<dbReference type="ExpressionAtlas" id="Q9UPS6">
    <property type="expression patterns" value="baseline and differential"/>
</dbReference>
<dbReference type="GO" id="GO:0005694">
    <property type="term" value="C:chromosome"/>
    <property type="evidence" value="ECO:0007669"/>
    <property type="project" value="UniProtKB-SubCell"/>
</dbReference>
<dbReference type="GO" id="GO:0005737">
    <property type="term" value="C:cytoplasm"/>
    <property type="evidence" value="ECO:0000314"/>
    <property type="project" value="UniProtKB"/>
</dbReference>
<dbReference type="GO" id="GO:0035097">
    <property type="term" value="C:histone methyltransferase complex"/>
    <property type="evidence" value="ECO:0000314"/>
    <property type="project" value="UniProtKB"/>
</dbReference>
<dbReference type="GO" id="GO:0016607">
    <property type="term" value="C:nuclear speck"/>
    <property type="evidence" value="ECO:0007669"/>
    <property type="project" value="UniProtKB-SubCell"/>
</dbReference>
<dbReference type="GO" id="GO:0005654">
    <property type="term" value="C:nucleoplasm"/>
    <property type="evidence" value="ECO:0000314"/>
    <property type="project" value="HPA"/>
</dbReference>
<dbReference type="GO" id="GO:0005634">
    <property type="term" value="C:nucleus"/>
    <property type="evidence" value="ECO:0000314"/>
    <property type="project" value="UniProtKB"/>
</dbReference>
<dbReference type="GO" id="GO:0048188">
    <property type="term" value="C:Set1C/COMPASS complex"/>
    <property type="evidence" value="ECO:0000314"/>
    <property type="project" value="UniProtKB"/>
</dbReference>
<dbReference type="GO" id="GO:0140938">
    <property type="term" value="F:histone H3 methyltransferase activity"/>
    <property type="evidence" value="ECO:0000304"/>
    <property type="project" value="Reactome"/>
</dbReference>
<dbReference type="GO" id="GO:0140945">
    <property type="term" value="F:histone H3K4 monomethyltransferase activity"/>
    <property type="evidence" value="ECO:0007669"/>
    <property type="project" value="RHEA"/>
</dbReference>
<dbReference type="GO" id="GO:0140999">
    <property type="term" value="F:histone H3K4 trimethyltransferase activity"/>
    <property type="evidence" value="ECO:0007669"/>
    <property type="project" value="UniProtKB-EC"/>
</dbReference>
<dbReference type="GO" id="GO:0003723">
    <property type="term" value="F:RNA binding"/>
    <property type="evidence" value="ECO:0007669"/>
    <property type="project" value="UniProtKB-KW"/>
</dbReference>
<dbReference type="GO" id="GO:0032259">
    <property type="term" value="P:methylation"/>
    <property type="evidence" value="ECO:0007669"/>
    <property type="project" value="UniProtKB-KW"/>
</dbReference>
<dbReference type="CDD" id="cd12549">
    <property type="entry name" value="RRM_Set1B"/>
    <property type="match status" value="1"/>
</dbReference>
<dbReference type="CDD" id="cd19169">
    <property type="entry name" value="SET_SETD1"/>
    <property type="match status" value="1"/>
</dbReference>
<dbReference type="FunFam" id="2.170.270.10:FF:000010">
    <property type="entry name" value="Histone-lysine N-methyltransferase"/>
    <property type="match status" value="1"/>
</dbReference>
<dbReference type="FunFam" id="3.30.70.330:FF:000178">
    <property type="entry name" value="Histone-lysine N-methyltransferase"/>
    <property type="match status" value="1"/>
</dbReference>
<dbReference type="Gene3D" id="3.30.70.330">
    <property type="match status" value="1"/>
</dbReference>
<dbReference type="Gene3D" id="2.170.270.10">
    <property type="entry name" value="SET domain"/>
    <property type="match status" value="1"/>
</dbReference>
<dbReference type="IDEAL" id="IID00402"/>
<dbReference type="InterPro" id="IPR024657">
    <property type="entry name" value="COMPASS_Set1_N-SET"/>
</dbReference>
<dbReference type="InterPro" id="IPR012677">
    <property type="entry name" value="Nucleotide-bd_a/b_plait_sf"/>
</dbReference>
<dbReference type="InterPro" id="IPR003616">
    <property type="entry name" value="Post-SET_dom"/>
</dbReference>
<dbReference type="InterPro" id="IPR035979">
    <property type="entry name" value="RBD_domain_sf"/>
</dbReference>
<dbReference type="InterPro" id="IPR000504">
    <property type="entry name" value="RRM_dom"/>
</dbReference>
<dbReference type="InterPro" id="IPR044570">
    <property type="entry name" value="Set1-like"/>
</dbReference>
<dbReference type="InterPro" id="IPR034468">
    <property type="entry name" value="Set1B_RRM"/>
</dbReference>
<dbReference type="InterPro" id="IPR001214">
    <property type="entry name" value="SET_dom"/>
</dbReference>
<dbReference type="InterPro" id="IPR046341">
    <property type="entry name" value="SET_dom_sf"/>
</dbReference>
<dbReference type="InterPro" id="IPR037841">
    <property type="entry name" value="SET_SETD1A/B"/>
</dbReference>
<dbReference type="PANTHER" id="PTHR45814">
    <property type="entry name" value="HISTONE-LYSINE N-METHYLTRANSFERASE SETD1"/>
    <property type="match status" value="1"/>
</dbReference>
<dbReference type="PANTHER" id="PTHR45814:SF1">
    <property type="entry name" value="HISTONE-LYSINE N-METHYLTRANSFERASE SETD1B"/>
    <property type="match status" value="1"/>
</dbReference>
<dbReference type="Pfam" id="PF11764">
    <property type="entry name" value="N-SET"/>
    <property type="match status" value="1"/>
</dbReference>
<dbReference type="Pfam" id="PF00076">
    <property type="entry name" value="RRM_1"/>
    <property type="match status" value="1"/>
</dbReference>
<dbReference type="Pfam" id="PF00856">
    <property type="entry name" value="SET"/>
    <property type="match status" value="1"/>
</dbReference>
<dbReference type="SMART" id="SM01291">
    <property type="entry name" value="N-SET"/>
    <property type="match status" value="1"/>
</dbReference>
<dbReference type="SMART" id="SM00508">
    <property type="entry name" value="PostSET"/>
    <property type="match status" value="1"/>
</dbReference>
<dbReference type="SMART" id="SM00360">
    <property type="entry name" value="RRM"/>
    <property type="match status" value="1"/>
</dbReference>
<dbReference type="SMART" id="SM00317">
    <property type="entry name" value="SET"/>
    <property type="match status" value="1"/>
</dbReference>
<dbReference type="SUPFAM" id="SSF54928">
    <property type="entry name" value="RNA-binding domain, RBD"/>
    <property type="match status" value="1"/>
</dbReference>
<dbReference type="SUPFAM" id="SSF82199">
    <property type="entry name" value="SET domain"/>
    <property type="match status" value="1"/>
</dbReference>
<dbReference type="PROSITE" id="PS50868">
    <property type="entry name" value="POST_SET"/>
    <property type="match status" value="1"/>
</dbReference>
<dbReference type="PROSITE" id="PS50102">
    <property type="entry name" value="RRM"/>
    <property type="match status" value="1"/>
</dbReference>
<dbReference type="PROSITE" id="PS50280">
    <property type="entry name" value="SET"/>
    <property type="match status" value="1"/>
</dbReference>
<comment type="function">
    <text evidence="2 8 15">Histone methyltransferase that catalyzes methyl group transfer from S-adenosyl-L-methionine to the epsilon-amino group of 'Lys-4' of histone H3 (H3K4) via a non-processive mechanism (PubMed:17355966, PubMed:25561738). Part of chromatin remodeling machinery, forms H3K4me1, H3K4me2 and H3K4me3 methylation marks at active chromatin sites where transcription and DNA repair take place (PubMed:17355966, PubMed:25561738). Plays an essential role in regulating the transcriptional programming of multipotent hematopoietic progenitor cells and lymphoid lineage specification during hematopoiesis (By similarity).</text>
</comment>
<comment type="catalytic activity">
    <reaction evidence="15">
        <text>L-lysyl(4)-[histone H3] + S-adenosyl-L-methionine = N(6)-methyl-L-lysyl(4)-[histone H3] + S-adenosyl-L-homocysteine + H(+)</text>
        <dbReference type="Rhea" id="RHEA:60264"/>
        <dbReference type="Rhea" id="RHEA-COMP:15543"/>
        <dbReference type="Rhea" id="RHEA-COMP:15547"/>
        <dbReference type="ChEBI" id="CHEBI:15378"/>
        <dbReference type="ChEBI" id="CHEBI:29969"/>
        <dbReference type="ChEBI" id="CHEBI:57856"/>
        <dbReference type="ChEBI" id="CHEBI:59789"/>
        <dbReference type="ChEBI" id="CHEBI:61929"/>
        <dbReference type="EC" id="2.1.1.364"/>
    </reaction>
    <physiologicalReaction direction="left-to-right" evidence="25">
        <dbReference type="Rhea" id="RHEA:60265"/>
    </physiologicalReaction>
</comment>
<comment type="catalytic activity">
    <reaction evidence="8 15">
        <text>N(6)-methyl-L-lysyl(4)-[histone H3] + S-adenosyl-L-methionine = N(6),N(6)-dimethyl-L-lysyl(4)-[histone H3] + S-adenosyl-L-homocysteine + H(+)</text>
        <dbReference type="Rhea" id="RHEA:60268"/>
        <dbReference type="Rhea" id="RHEA-COMP:15540"/>
        <dbReference type="Rhea" id="RHEA-COMP:15543"/>
        <dbReference type="ChEBI" id="CHEBI:15378"/>
        <dbReference type="ChEBI" id="CHEBI:57856"/>
        <dbReference type="ChEBI" id="CHEBI:59789"/>
        <dbReference type="ChEBI" id="CHEBI:61929"/>
        <dbReference type="ChEBI" id="CHEBI:61976"/>
    </reaction>
    <physiologicalReaction direction="left-to-right" evidence="24 25">
        <dbReference type="Rhea" id="RHEA:60269"/>
    </physiologicalReaction>
</comment>
<comment type="catalytic activity">
    <reaction evidence="8 15">
        <text>N(6),N(6)-dimethyl-L-lysyl(4)-[histone H3] + S-adenosyl-L-methionine = N(6),N(6),N(6)-trimethyl-L-lysyl(4)-[histone H3] + S-adenosyl-L-homocysteine + H(+)</text>
        <dbReference type="Rhea" id="RHEA:60272"/>
        <dbReference type="Rhea" id="RHEA-COMP:15537"/>
        <dbReference type="Rhea" id="RHEA-COMP:15540"/>
        <dbReference type="ChEBI" id="CHEBI:15378"/>
        <dbReference type="ChEBI" id="CHEBI:57856"/>
        <dbReference type="ChEBI" id="CHEBI:59789"/>
        <dbReference type="ChEBI" id="CHEBI:61961"/>
        <dbReference type="ChEBI" id="CHEBI:61976"/>
    </reaction>
    <physiologicalReaction direction="left-to-right" evidence="24 25">
        <dbReference type="Rhea" id="RHEA:60273"/>
    </physiologicalReaction>
</comment>
<comment type="subunit">
    <text evidence="8 9 10 13 14 15 21">Component of the SET1B/COMPASS complex composed of the catalytic subunit SETD1B, WDR5, WDR82, RBBP5, ASH2L/ASH2, CXXC1/CFP1, HCFC1, DPY30 homotrimer and BOD1 (PubMed:17355966, PubMed:18838538, PubMed:23508102). Forms a core complex with the evolutionary conserved subcomplex WRAD composed of WDR5, RBBP5, ASH2L/ASH2 and DPY30 subunits; WRAD differentially stimulates the methyltransferase activity (PubMed:25561738). Interacts with HCFC1 and ASH2L/ASH2 (PubMed:17998332). Interacts (via N-terminal region) with WDR82 (PubMed:17998332, PubMed:37030068). Interacts (via the RRM domain) with hyperphosphorylated C-terminal domain (CTD) of RNA polymerase II large subunit (POLR2A) only in the presence of WDR82 (PubMed:17998332). Binds specifically to CTD heptad repeats phosphorylated on 'Ser-5' of each heptad. Interacts with RBM15 (PubMed:22927943). Interacts (via WIN motif) with WDR5 (PubMed:22266653, PubMed:22665483).</text>
</comment>
<comment type="interaction">
    <interactant intactId="EBI-16197836">
        <id>Q9UPS6-2</id>
    </interactant>
    <interactant intactId="EBI-16130425">
        <id>Q9UBL3-3</id>
        <label>ASH2L</label>
    </interactant>
    <organismsDiffer>false</organismsDiffer>
    <experiments>2</experiments>
</comment>
<comment type="subcellular location">
    <subcellularLocation>
        <location evidence="22">Nucleus</location>
    </subcellularLocation>
    <subcellularLocation>
        <location evidence="8">Nucleus speckle</location>
    </subcellularLocation>
    <subcellularLocation>
        <location evidence="8">Chromosome</location>
    </subcellularLocation>
    <subcellularLocation>
        <location evidence="22">Cytoplasm</location>
    </subcellularLocation>
    <text evidence="8 22 26">Localizes to a largely non-overlapping set of euchromatic nuclear speckles with SETD1A, suggesting that SETD1A and SET1B each bind to a unique set of target genes (Probable) (PubMed:17355966). Predominantly nuclear (PubMed:38003223).</text>
</comment>
<comment type="alternative products">
    <event type="alternative splicing"/>
    <isoform>
        <id>Q9UPS6-1</id>
        <name>1</name>
        <sequence type="displayed"/>
    </isoform>
    <isoform>
        <id>Q9UPS6-2</id>
        <name>2</name>
        <sequence type="described" ref="VSP_053875 VSP_053876"/>
    </isoform>
</comment>
<comment type="disease" evidence="16 17 18 19 20">
    <disease id="DI-05906">
        <name>Intellectual developmental disorder with seizures and language delay</name>
        <acronym>IDDSELD</acronym>
        <description>An autosomal dominant neurodevelopmental disorder characterized by mild to profound intellectual development impairment, speech and language delay, and seizures. Autism and anxiety are common features. Facial dysmorphism, tapering fingers, and pigmentary skin changes may also be observed.</description>
        <dbReference type="MIM" id="619000"/>
    </disease>
    <text>The disease is caused by variants affecting the gene represented in this entry.</text>
</comment>
<comment type="similarity">
    <text evidence="6">Belongs to the class V-like SAM-binding methyltransferase superfamily.</text>
</comment>
<protein>
    <recommendedName>
        <fullName>Histone-lysine N-methyltransferase SETD1B</fullName>
        <ecNumber evidence="15">2.1.1.364</ecNumber>
    </recommendedName>
    <alternativeName>
        <fullName>Lysine N-methyltransferase 2G</fullName>
    </alternativeName>
    <alternativeName>
        <fullName>SET domain-containing protein 1B</fullName>
        <shortName>hSET1B</shortName>
    </alternativeName>
</protein>